<keyword id="KW-0903">Direct protein sequencing</keyword>
<keyword id="KW-1015">Disulfide bond</keyword>
<keyword id="KW-0872">Ion channel impairing toxin</keyword>
<keyword id="KW-1028">Ionotropic glutamate receptor inhibitor</keyword>
<keyword id="KW-0960">Knottin</keyword>
<keyword id="KW-0528">Neurotoxin</keyword>
<keyword id="KW-0629">Postsynaptic neurotoxin</keyword>
<keyword id="KW-0964">Secreted</keyword>
<keyword id="KW-0800">Toxin</keyword>
<keyword id="KW-0738">Voltage-gated sodium channel impairing toxin</keyword>
<organism>
    <name type="scientific">Ctenus ornatus</name>
    <name type="common">Brazilian spider</name>
    <name type="synonym">Oligoctenus ornatus</name>
    <dbReference type="NCBI Taxonomy" id="406443"/>
    <lineage>
        <taxon>Eukaryota</taxon>
        <taxon>Metazoa</taxon>
        <taxon>Ecdysozoa</taxon>
        <taxon>Arthropoda</taxon>
        <taxon>Chelicerata</taxon>
        <taxon>Arachnida</taxon>
        <taxon>Araneae</taxon>
        <taxon>Araneomorphae</taxon>
        <taxon>Entelegynae</taxon>
        <taxon>Lycosoidea</taxon>
        <taxon>Ctenidae</taxon>
        <taxon>Oligoctenus</taxon>
    </lineage>
</organism>
<reference key="1">
    <citation type="submission" date="2007-07" db="UniProtKB">
        <authorList>
            <person name="Borges M.H."/>
            <person name="Oliveira C.F.B."/>
            <person name="Goncalves J.M."/>
            <person name="Rates B."/>
            <person name="Santos D.M."/>
            <person name="Pimenta A.M.C."/>
            <person name="Cordeiro M.N."/>
            <person name="Richardson M."/>
        </authorList>
    </citation>
    <scope>PROTEIN SEQUENCE</scope>
    <scope>SUBCELLULAR LOCATION</scope>
    <scope>MASS SPECTROMETRY</scope>
    <source>
        <tissue>Venom</tissue>
    </source>
</reference>
<evidence type="ECO:0000250" key="1">
    <source>
        <dbReference type="UniProtKB" id="P59367"/>
    </source>
</evidence>
<evidence type="ECO:0000269" key="2">
    <source ref="1"/>
</evidence>
<evidence type="ECO:0000303" key="3">
    <source ref="1"/>
</evidence>
<evidence type="ECO:0000305" key="4"/>
<evidence type="ECO:0000305" key="5">
    <source ref="1"/>
</evidence>
<proteinExistence type="evidence at protein level"/>
<protein>
    <recommendedName>
        <fullName evidence="4">U12-ctenitoxin-Co1a</fullName>
        <shortName evidence="4">U12-CNTX-Co1a</shortName>
    </recommendedName>
    <alternativeName>
        <fullName evidence="3">Neurotoxin Oc M14-5</fullName>
    </alternativeName>
</protein>
<sequence length="40" mass="4335">GCGDINAACKSDCDCCGNSVTCDCYFTDCKCRESAIRKQF</sequence>
<accession>P85265</accession>
<feature type="chain" id="PRO_0000302112" description="U12-ctenitoxin-Co1a" evidence="5">
    <location>
        <begin position="1"/>
        <end position="40" status="greater than"/>
    </location>
</feature>
<feature type="disulfide bond" evidence="4">
    <location>
        <begin position="2"/>
        <end position="16"/>
    </location>
</feature>
<feature type="disulfide bond" evidence="4">
    <location>
        <begin position="9"/>
        <end position="22"/>
    </location>
</feature>
<feature type="disulfide bond" evidence="4">
    <location>
        <begin position="13"/>
        <end status="unknown"/>
    </location>
</feature>
<feature type="disulfide bond" evidence="4">
    <location>
        <begin position="15"/>
        <end position="31"/>
    </location>
</feature>
<feature type="disulfide bond" evidence="4">
    <location>
        <begin position="24"/>
        <end position="29"/>
    </location>
</feature>
<feature type="non-consecutive residues" evidence="5">
    <location>
        <begin position="34"/>
        <end position="35"/>
    </location>
</feature>
<feature type="non-terminal residue" evidence="5">
    <location>
        <position position="40"/>
    </location>
</feature>
<dbReference type="SMR" id="P85265"/>
<dbReference type="ArachnoServer" id="AS000369">
    <property type="toxin name" value="U12-ctenitoxin-Co1a"/>
</dbReference>
<dbReference type="GO" id="GO:0005576">
    <property type="term" value="C:extracellular region"/>
    <property type="evidence" value="ECO:0007669"/>
    <property type="project" value="UniProtKB-SubCell"/>
</dbReference>
<dbReference type="GO" id="GO:0035792">
    <property type="term" value="C:host cell postsynaptic membrane"/>
    <property type="evidence" value="ECO:0007669"/>
    <property type="project" value="UniProtKB-KW"/>
</dbReference>
<dbReference type="GO" id="GO:0017080">
    <property type="term" value="F:sodium channel regulator activity"/>
    <property type="evidence" value="ECO:0007669"/>
    <property type="project" value="UniProtKB-KW"/>
</dbReference>
<dbReference type="GO" id="GO:0090729">
    <property type="term" value="F:toxin activity"/>
    <property type="evidence" value="ECO:0007669"/>
    <property type="project" value="UniProtKB-KW"/>
</dbReference>
<name>TX35E_CTEON</name>
<comment type="function">
    <text evidence="1">Insecticidal neurotoxin that reversibly inhibits the N-methyl-D-aspartate (NMDA)-subtype of ionotropic glutamate receptor (GRIN) and inhibits inactivation of insect sodium channels (Nav). In vivo, is highly toxic to insects.</text>
</comment>
<comment type="subcellular location">
    <subcellularLocation>
        <location evidence="2">Secreted</location>
    </subcellularLocation>
</comment>
<comment type="tissue specificity">
    <text evidence="5">Expressed by the venom gland.</text>
</comment>
<comment type="domain">
    <text evidence="4">The presence of a 'disulfide through disulfide knot' structurally defines this protein as a knottin.</text>
</comment>
<comment type="mass spectrometry" mass="4560.6" error="0.46" method="Electrospray" evidence="2"/>
<comment type="similarity">
    <text evidence="4">Belongs to the neurotoxin 03 (Tx2) family. 05 subfamily.</text>
</comment>